<comment type="function">
    <text evidence="4">Acts as a component of the Sec62/63 complex which is involved in SRP-independent post-translational translocation across the endoplasmic reticulum (ER) and functions together with the Sec61 complex and KAR2 in a channel-forming translocon complex. A cycle of assembly and disassembly of Sec62/63 complex from SEC61 may govern the activity of the translocon. SEC63 may affect SEC1-polypeptide interactions by increasing the affinity of targeting pathways for SEC61 and/or by modifying SEC61 to allow more efficient polypeptide interaction. May also be involved in SRP-dependent cotranslational translocation. Is essential for cell growth and for germination.</text>
</comment>
<comment type="subunit">
    <text evidence="5 7 8 9 10">Component of the heterotetrameric Sec62/63complex composed of SEC62, SEC63, SEC66 and SEC72. The Sec62/63 complex associates with the Sec61 complex to form the Sec complex. SEC63 interacts in its phosphorylated form with SEC62. May physically associate with KAR2 in the endoplasmic reticulum and this interaction may be regulated by ATP hydrolysis. Part of a complex consisting of KAR2, SEC63, SEC66 and SEC72.</text>
</comment>
<comment type="interaction">
    <interactant intactId="EBI-16636">
        <id>P14906</id>
    </interactant>
    <interactant intactId="EBI-16632">
        <id>P21825</id>
        <label>SEC62</label>
    </interactant>
    <organismsDiffer>false</organismsDiffer>
    <experiments>8</experiments>
</comment>
<comment type="interaction">
    <interactant intactId="EBI-16636">
        <id>P14906</id>
    </interactant>
    <interactant intactId="EBI-16647">
        <id>P33754</id>
        <label>SEC66</label>
    </interactant>
    <organismsDiffer>false</organismsDiffer>
    <experiments>5</experiments>
</comment>
<comment type="interaction">
    <interactant intactId="EBI-16636">
        <id>P14906</id>
    </interactant>
    <interactant intactId="EBI-16651">
        <id>P39742</id>
        <label>SEC72</label>
    </interactant>
    <organismsDiffer>false</organismsDiffer>
    <experiments>5</experiments>
</comment>
<comment type="subcellular location">
    <subcellularLocation>
        <location>Endoplasmic reticulum membrane</location>
        <topology>Multi-pass membrane protein</topology>
    </subcellularLocation>
    <subcellularLocation>
        <location>Nucleus membrane</location>
        <topology>Multi-pass membrane protein</topology>
    </subcellularLocation>
    <subcellularLocation>
        <location>Nucleus inner membrane</location>
        <topology>Multi-pass membrane protein</topology>
    </subcellularLocation>
</comment>
<comment type="PTM">
    <text>Phosphotylated by casein kinase II.</text>
</comment>
<comment type="miscellaneous">
    <text evidence="6">Present with 17700 molecules/cell in log phase SD medium.</text>
</comment>
<protein>
    <recommendedName>
        <fullName>Protein translocation protein SEC63</fullName>
    </recommendedName>
    <alternativeName>
        <fullName>Protein NPL1</fullName>
    </alternativeName>
    <alternativeName>
        <fullName>Sec62/63 complex 73 kDa subunit</fullName>
    </alternativeName>
</protein>
<accession>P14906</accession>
<accession>D6W2V5</accession>
<accession>Q08690</accession>
<evidence type="ECO:0000255" key="1"/>
<evidence type="ECO:0000255" key="2">
    <source>
        <dbReference type="PROSITE-ProRule" id="PRU00286"/>
    </source>
</evidence>
<evidence type="ECO:0000256" key="3">
    <source>
        <dbReference type="SAM" id="MobiDB-lite"/>
    </source>
</evidence>
<evidence type="ECO:0000269" key="4">
    <source>
    </source>
</evidence>
<evidence type="ECO:0000269" key="5">
    <source>
    </source>
</evidence>
<evidence type="ECO:0000269" key="6">
    <source>
    </source>
</evidence>
<evidence type="ECO:0000269" key="7">
    <source>
    </source>
</evidence>
<evidence type="ECO:0000269" key="8">
    <source>
    </source>
</evidence>
<evidence type="ECO:0000269" key="9">
    <source>
    </source>
</evidence>
<evidence type="ECO:0000269" key="10">
    <source>
    </source>
</evidence>
<evidence type="ECO:0000269" key="11">
    <source>
    </source>
</evidence>
<evidence type="ECO:0000305" key="12"/>
<evidence type="ECO:0007744" key="13">
    <source>
    </source>
</evidence>
<evidence type="ECO:0007744" key="14">
    <source>
    </source>
</evidence>
<evidence type="ECO:0007744" key="15">
    <source>
    </source>
</evidence>
<evidence type="ECO:0007744" key="16">
    <source>
    </source>
</evidence>
<evidence type="ECO:0007829" key="17">
    <source>
        <dbReference type="PDB" id="7KAH"/>
    </source>
</evidence>
<evidence type="ECO:0007829" key="18">
    <source>
        <dbReference type="PDB" id="7KAI"/>
    </source>
</evidence>
<evidence type="ECO:0007829" key="19">
    <source>
        <dbReference type="PDB" id="7KAJ"/>
    </source>
</evidence>
<reference key="1">
    <citation type="journal article" date="1989" name="J. Cell Biol.">
        <title>A yeast gene important for protein assembly into the endoplasmic reticulum and the nucleus has homology to DnaJ, an Escherichia coli heat shock protein.</title>
        <authorList>
            <person name="Sadler I."/>
            <person name="Chiang A."/>
            <person name="Kurihara T."/>
            <person name="Rothblatt J.A."/>
            <person name="Way J."/>
            <person name="Silver P.A."/>
        </authorList>
    </citation>
    <scope>NUCLEOTIDE SEQUENCE [GENOMIC DNA]</scope>
</reference>
<reference key="2">
    <citation type="journal article" date="1997" name="Yeast">
        <title>Sequencing analysis of a 36.8 kb fragment of yeast chromosome XV reveals 26 open reading frames including SEC63, CDC31, SUG2, GCD1, RBL2, PNT1, PAC1 and VPH1.</title>
        <authorList>
            <person name="Poirey R."/>
            <person name="Jauniaux J.-C."/>
        </authorList>
    </citation>
    <scope>NUCLEOTIDE SEQUENCE [GENOMIC DNA]</scope>
    <source>
        <strain>ATCC 96604 / S288c / FY1679</strain>
    </source>
</reference>
<reference key="3">
    <citation type="journal article" date="1997" name="Nature">
        <title>The nucleotide sequence of Saccharomyces cerevisiae chromosome XV.</title>
        <authorList>
            <person name="Dujon B."/>
            <person name="Albermann K."/>
            <person name="Aldea M."/>
            <person name="Alexandraki D."/>
            <person name="Ansorge W."/>
            <person name="Arino J."/>
            <person name="Benes V."/>
            <person name="Bohn C."/>
            <person name="Bolotin-Fukuhara M."/>
            <person name="Bordonne R."/>
            <person name="Boyer J."/>
            <person name="Camasses A."/>
            <person name="Casamayor A."/>
            <person name="Casas C."/>
            <person name="Cheret G."/>
            <person name="Cziepluch C."/>
            <person name="Daignan-Fornier B."/>
            <person name="Dang V.-D."/>
            <person name="de Haan M."/>
            <person name="Delius H."/>
            <person name="Durand P."/>
            <person name="Fairhead C."/>
            <person name="Feldmann H."/>
            <person name="Gaillon L."/>
            <person name="Galisson F."/>
            <person name="Gamo F.-J."/>
            <person name="Gancedo C."/>
            <person name="Goffeau A."/>
            <person name="Goulding S.E."/>
            <person name="Grivell L.A."/>
            <person name="Habbig B."/>
            <person name="Hand N.J."/>
            <person name="Hani J."/>
            <person name="Hattenhorst U."/>
            <person name="Hebling U."/>
            <person name="Hernando Y."/>
            <person name="Herrero E."/>
            <person name="Heumann K."/>
            <person name="Hiesel R."/>
            <person name="Hilger F."/>
            <person name="Hofmann B."/>
            <person name="Hollenberg C.P."/>
            <person name="Hughes B."/>
            <person name="Jauniaux J.-C."/>
            <person name="Kalogeropoulos A."/>
            <person name="Katsoulou C."/>
            <person name="Kordes E."/>
            <person name="Lafuente M.J."/>
            <person name="Landt O."/>
            <person name="Louis E.J."/>
            <person name="Maarse A.C."/>
            <person name="Madania A."/>
            <person name="Mannhaupt G."/>
            <person name="Marck C."/>
            <person name="Martin R.P."/>
            <person name="Mewes H.-W."/>
            <person name="Michaux G."/>
            <person name="Paces V."/>
            <person name="Parle-McDermott A.G."/>
            <person name="Pearson B.M."/>
            <person name="Perrin A."/>
            <person name="Pettersson B."/>
            <person name="Poch O."/>
            <person name="Pohl T.M."/>
            <person name="Poirey R."/>
            <person name="Portetelle D."/>
            <person name="Pujol A."/>
            <person name="Purnelle B."/>
            <person name="Ramezani Rad M."/>
            <person name="Rechmann S."/>
            <person name="Schwager C."/>
            <person name="Schweizer M."/>
            <person name="Sor F."/>
            <person name="Sterky F."/>
            <person name="Tarassov I.A."/>
            <person name="Teodoru C."/>
            <person name="Tettelin H."/>
            <person name="Thierry A."/>
            <person name="Tobiasch E."/>
            <person name="Tzermia M."/>
            <person name="Uhlen M."/>
            <person name="Unseld M."/>
            <person name="Valens M."/>
            <person name="Vandenbol M."/>
            <person name="Vetter I."/>
            <person name="Vlcek C."/>
            <person name="Voet M."/>
            <person name="Volckaert G."/>
            <person name="Voss H."/>
            <person name="Wambutt R."/>
            <person name="Wedler H."/>
            <person name="Wiemann S."/>
            <person name="Winsor B."/>
            <person name="Wolfe K.H."/>
            <person name="Zollner A."/>
            <person name="Zumstein E."/>
            <person name="Kleine K."/>
        </authorList>
    </citation>
    <scope>NUCLEOTIDE SEQUENCE [LARGE SCALE GENOMIC DNA]</scope>
    <source>
        <strain>ATCC 204508 / S288c</strain>
    </source>
</reference>
<reference key="4">
    <citation type="journal article" date="2014" name="G3 (Bethesda)">
        <title>The reference genome sequence of Saccharomyces cerevisiae: Then and now.</title>
        <authorList>
            <person name="Engel S.R."/>
            <person name="Dietrich F.S."/>
            <person name="Fisk D.G."/>
            <person name="Binkley G."/>
            <person name="Balakrishnan R."/>
            <person name="Costanzo M.C."/>
            <person name="Dwight S.S."/>
            <person name="Hitz B.C."/>
            <person name="Karra K."/>
            <person name="Nash R.S."/>
            <person name="Weng S."/>
            <person name="Wong E.D."/>
            <person name="Lloyd P."/>
            <person name="Skrzypek M.S."/>
            <person name="Miyasato S.R."/>
            <person name="Simison M."/>
            <person name="Cherry J.M."/>
        </authorList>
    </citation>
    <scope>GENOME REANNOTATION</scope>
    <source>
        <strain>ATCC 204508 / S288c</strain>
    </source>
</reference>
<reference key="5">
    <citation type="journal article" date="1991" name="Nature">
        <title>Assembly of yeast Sec proteins involved in translocation into the endoplasmic reticulum into a membrane-bound multisubunit complex.</title>
        <authorList>
            <person name="Deshaies R.J."/>
            <person name="Sanders S.L."/>
            <person name="Feldheim D.A."/>
            <person name="Schekman R."/>
        </authorList>
    </citation>
    <scope>IDENTIFICATION IN THE SEC62/63 COMPLEX</scope>
</reference>
<reference key="6">
    <citation type="journal article" date="1992" name="Mol. Cell. Biol.">
        <title>Topology and functional domains of Sec63p, an endoplasmic reticulum membrane protein required for secretory protein translocation.</title>
        <authorList>
            <person name="Feldheim D."/>
            <person name="Rothblatt J."/>
            <person name="Schekman R."/>
        </authorList>
    </citation>
    <scope>IDENTIFICATION IN THE SEC62/63 COMPLEX</scope>
</reference>
<reference key="7">
    <citation type="journal article" date="1993" name="Genetics">
        <title>Extragenic suppressors of mutations in the cytoplasmic C-terminus of SEC63 define five genes in Saccharomyces cerevisiae.</title>
        <authorList>
            <person name="Nelson M.K."/>
            <person name="Kurihara T."/>
            <person name="Silver P.A."/>
        </authorList>
    </citation>
    <scope>MUTAGENESIS</scope>
</reference>
<reference key="8">
    <citation type="journal article" date="1993" name="J. Cell Biol.">
        <title>A Sec63p-BiP complex from yeast is required for protein translocation in a reconstituted proteoliposome.</title>
        <authorList>
            <person name="Brodsky J.L."/>
            <person name="Schekman R."/>
        </authorList>
    </citation>
    <scope>IDENTIFICATION IN A COMPLEX WITH KAR2; SEC66 AND SEC72</scope>
</reference>
<reference key="9">
    <citation type="journal article" date="1995" name="Cell">
        <title>Posttranslational protein transport in yeast reconstituted with a purified complex of Sec proteins and Kar2p.</title>
        <authorList>
            <person name="Panzner S."/>
            <person name="Dreier L."/>
            <person name="Hartmann E."/>
            <person name="Kostka S."/>
            <person name="Rapoport T.A."/>
        </authorList>
    </citation>
    <scope>ASSOCIATION OF THE SEC62/63 COMPLEX WITH THE SEC61 COMPLEX</scope>
</reference>
<reference key="10">
    <citation type="journal article" date="2001" name="EMBO J.">
        <title>Sec63p and Kar2p are required for the translocation of SRP-dependent precursors into the yeast endoplasmic reticulum in vivo.</title>
        <authorList>
            <person name="Young B.P."/>
            <person name="Craven R.A."/>
            <person name="Reid P.J."/>
            <person name="Willer M."/>
            <person name="Stirling C.J."/>
        </authorList>
    </citation>
    <scope>FUNCTION</scope>
</reference>
<reference key="11">
    <citation type="journal article" date="2003" name="Mol. Cell">
        <title>Assigning function to yeast proteins by integration of technologies.</title>
        <authorList>
            <person name="Hazbun T.R."/>
            <person name="Malmstroem L."/>
            <person name="Anderson S."/>
            <person name="Graczyk B.J."/>
            <person name="Fox B."/>
            <person name="Riffle M."/>
            <person name="Sundin B.A."/>
            <person name="Aranda J.D."/>
            <person name="McDonald W.H."/>
            <person name="Chiu C.-H."/>
            <person name="Snydsman B.E."/>
            <person name="Bradley P."/>
            <person name="Muller E.G.D."/>
            <person name="Fields S."/>
            <person name="Baker D."/>
            <person name="Yates J.R. III"/>
            <person name="Davis T.N."/>
        </authorList>
    </citation>
    <scope>IDENTIFICATION BY MASS SPECTROMETRY</scope>
</reference>
<reference key="12">
    <citation type="journal article" date="2003" name="Nature">
        <title>Global analysis of protein expression in yeast.</title>
        <authorList>
            <person name="Ghaemmaghami S."/>
            <person name="Huh W.-K."/>
            <person name="Bower K."/>
            <person name="Howson R.W."/>
            <person name="Belle A."/>
            <person name="Dephoure N."/>
            <person name="O'Shea E.K."/>
            <person name="Weissman J.S."/>
        </authorList>
    </citation>
    <scope>LEVEL OF PROTEIN EXPRESSION [LARGE SCALE ANALYSIS]</scope>
</reference>
<reference key="13">
    <citation type="journal article" date="2003" name="Yeast">
        <title>Identification of novel protein-protein interactions at the cytosolic surface of the Sec63 complex in the yeast ER membrane.</title>
        <authorList>
            <person name="Willer M."/>
            <person name="Jermy A.J."/>
            <person name="Young B.P."/>
            <person name="Stirling C.J."/>
        </authorList>
    </citation>
    <scope>INTERACTION WITH SEC63</scope>
</reference>
<reference key="14">
    <citation type="journal article" date="2005" name="J. Cell Sci.">
        <title>Protein kinase CK2 phosphorylates Sec63p to stimulate the assembly of the endoplasmic reticulum protein translocation apparatus.</title>
        <authorList>
            <person name="Wang X."/>
            <person name="Johnsson N."/>
        </authorList>
    </citation>
    <scope>PHOSPHORYLATION BY CASEIN KINASE II</scope>
    <scope>INTERACTION WITH SEC63</scope>
    <scope>MUTAGENESIS OF THR-652 AND THR-654</scope>
</reference>
<reference key="15">
    <citation type="journal article" date="2006" name="Proc. Natl. Acad. Sci. U.S.A.">
        <title>A global topology map of the Saccharomyces cerevisiae membrane proteome.</title>
        <authorList>
            <person name="Kim H."/>
            <person name="Melen K."/>
            <person name="Oesterberg M."/>
            <person name="von Heijne G."/>
        </authorList>
    </citation>
    <scope>TOPOLOGY [LARGE SCALE ANALYSIS]</scope>
    <source>
        <strain>ATCC 208353 / W303-1A</strain>
    </source>
</reference>
<reference key="16">
    <citation type="journal article" date="2007" name="J. Proteome Res.">
        <title>Large-scale phosphorylation analysis of alpha-factor-arrested Saccharomyces cerevisiae.</title>
        <authorList>
            <person name="Li X."/>
            <person name="Gerber S.A."/>
            <person name="Rudner A.D."/>
            <person name="Beausoleil S.A."/>
            <person name="Haas W."/>
            <person name="Villen J."/>
            <person name="Elias J.E."/>
            <person name="Gygi S.P."/>
        </authorList>
    </citation>
    <scope>PHOSPHORYLATION [LARGE SCALE ANALYSIS] AT SER-512</scope>
    <scope>IDENTIFICATION BY MASS SPECTROMETRY [LARGE SCALE ANALYSIS]</scope>
    <source>
        <strain>ADR376</strain>
    </source>
</reference>
<reference key="17">
    <citation type="journal article" date="2007" name="Proc. Natl. Acad. Sci. U.S.A.">
        <title>Analysis of phosphorylation sites on proteins from Saccharomyces cerevisiae by electron transfer dissociation (ETD) mass spectrometry.</title>
        <authorList>
            <person name="Chi A."/>
            <person name="Huttenhower C."/>
            <person name="Geer L.Y."/>
            <person name="Coon J.J."/>
            <person name="Syka J.E.P."/>
            <person name="Bai D.L."/>
            <person name="Shabanowitz J."/>
            <person name="Burke D.J."/>
            <person name="Troyanskaya O.G."/>
            <person name="Hunt D.F."/>
        </authorList>
    </citation>
    <scope>PHOSPHORYLATION [LARGE SCALE ANALYSIS] AT SER-512</scope>
    <scope>IDENTIFICATION BY MASS SPECTROMETRY [LARGE SCALE ANALYSIS]</scope>
</reference>
<reference key="18">
    <citation type="journal article" date="2008" name="Mol. Cell. Proteomics">
        <title>A multidimensional chromatography technology for in-depth phosphoproteome analysis.</title>
        <authorList>
            <person name="Albuquerque C.P."/>
            <person name="Smolka M.B."/>
            <person name="Payne S.H."/>
            <person name="Bafna V."/>
            <person name="Eng J."/>
            <person name="Zhou H."/>
        </authorList>
    </citation>
    <scope>PHOSPHORYLATION [LARGE SCALE ANALYSIS] AT SER-512</scope>
    <scope>IDENTIFICATION BY MASS SPECTROMETRY [LARGE SCALE ANALYSIS]</scope>
</reference>
<reference key="19">
    <citation type="journal article" date="2009" name="Science">
        <title>Global analysis of Cdk1 substrate phosphorylation sites provides insights into evolution.</title>
        <authorList>
            <person name="Holt L.J."/>
            <person name="Tuch B.B."/>
            <person name="Villen J."/>
            <person name="Johnson A.D."/>
            <person name="Gygi S.P."/>
            <person name="Morgan D.O."/>
        </authorList>
    </citation>
    <scope>PHOSPHORYLATION [LARGE SCALE ANALYSIS] AT SER-512</scope>
    <scope>IDENTIFICATION BY MASS SPECTROMETRY [LARGE SCALE ANALYSIS]</scope>
</reference>
<sequence>MPTNYEYDEASETWPSFILTGLLMVVGPMTLLQIYQIFFGANAEDGNSGKSKEFNEEVFKNLNEEYTSDEIKQFRRKFDKNSNKKSKIWSRRNIIIIVGWILVAILLQRINSNDAIKDAATKLFDPYEILGISTSASDRDIKSAYRKLSVKFHPDKLAKGLTPDEKSVMEETYVQITKAYESLTDELVRQNYLKYGHPDGPQSTSHGIALPRFLVDGSASPLLVVCYVALLGLILPYFVSRWWARTQSYTKKGIHNVTASNFVSNLVNYKPSEIVTTDLILHWLSFAHEFKQFFPDLQPTDFEKLLQDHINRRDSGKLNNAKFRIVAKCHSLLHGLLDIACGFRNLDIALGAINTFKCIVQAVPLTPNCQILQLPNVDKEHFITKTGDIHTLGKLFTLEDAKIGEVLGIKDQAKLNETLRVASHIPNLKIIKADFLVPGENQVTPSSTPYISLKVLVRSAKQPLIPTSLIPEENLTEPQDFESQRDPFAMMSKQPLVPYSFAPFFPTKRRGSWCCLVSSQKDGKILQTPIIIEKLSYKNLNDDKDFFDKRIKMDLTKHEKFDINDWEIGTIKIPLGQPAPETVGDFFFRVIVKSTDYFTTDLDITMNMKVRDSPAVEQVEVYSEEDDEYSTDDDETESDDESDASDYTDIDTDTEAEDDESPE</sequence>
<proteinExistence type="evidence at protein level"/>
<gene>
    <name type="primary">SEC63</name>
    <name type="synonym">NPL1</name>
    <name type="synonym">PTL1</name>
    <name type="ordered locus">YOR254C</name>
</gene>
<organism>
    <name type="scientific">Saccharomyces cerevisiae (strain ATCC 204508 / S288c)</name>
    <name type="common">Baker's yeast</name>
    <dbReference type="NCBI Taxonomy" id="559292"/>
    <lineage>
        <taxon>Eukaryota</taxon>
        <taxon>Fungi</taxon>
        <taxon>Dikarya</taxon>
        <taxon>Ascomycota</taxon>
        <taxon>Saccharomycotina</taxon>
        <taxon>Saccharomycetes</taxon>
        <taxon>Saccharomycetales</taxon>
        <taxon>Saccharomycetaceae</taxon>
        <taxon>Saccharomyces</taxon>
    </lineage>
</organism>
<name>SEC63_YEAST</name>
<dbReference type="EMBL" id="X16388">
    <property type="protein sequence ID" value="CAA34424.1"/>
    <property type="molecule type" value="Genomic_DNA"/>
</dbReference>
<dbReference type="EMBL" id="Z75162">
    <property type="protein sequence ID" value="CAA99476.1"/>
    <property type="molecule type" value="Genomic_DNA"/>
</dbReference>
<dbReference type="EMBL" id="BK006948">
    <property type="protein sequence ID" value="DAA11021.1"/>
    <property type="molecule type" value="Genomic_DNA"/>
</dbReference>
<dbReference type="PIR" id="A33618">
    <property type="entry name" value="A33618"/>
</dbReference>
<dbReference type="RefSeq" id="NP_014897.1">
    <property type="nucleotide sequence ID" value="NM_001183673.1"/>
</dbReference>
<dbReference type="PDB" id="6N3Q">
    <property type="method" value="EM"/>
    <property type="resolution" value="3.68 A"/>
    <property type="chains" value="D=1-663"/>
</dbReference>
<dbReference type="PDB" id="6ND1">
    <property type="method" value="EM"/>
    <property type="resolution" value="4.10 A"/>
    <property type="chains" value="A=1-663"/>
</dbReference>
<dbReference type="PDB" id="7AFT">
    <property type="method" value="EM"/>
    <property type="resolution" value="4.40 A"/>
    <property type="chains" value="D=1-663"/>
</dbReference>
<dbReference type="PDB" id="7KAH">
    <property type="method" value="EM"/>
    <property type="resolution" value="3.10 A"/>
    <property type="chains" value="D=2-663"/>
</dbReference>
<dbReference type="PDB" id="7KAI">
    <property type="method" value="EM"/>
    <property type="resolution" value="3.20 A"/>
    <property type="chains" value="D=2-663"/>
</dbReference>
<dbReference type="PDB" id="7KAJ">
    <property type="method" value="EM"/>
    <property type="resolution" value="3.10 A"/>
    <property type="chains" value="D=2-663"/>
</dbReference>
<dbReference type="PDB" id="7KAO">
    <property type="method" value="EM"/>
    <property type="resolution" value="4.00 A"/>
    <property type="chains" value="D=2-663"/>
</dbReference>
<dbReference type="PDB" id="7KAP">
    <property type="method" value="EM"/>
    <property type="resolution" value="4.10 A"/>
    <property type="chains" value="D=2-663"/>
</dbReference>
<dbReference type="PDB" id="7KAQ">
    <property type="method" value="EM"/>
    <property type="resolution" value="4.00 A"/>
    <property type="chains" value="D=2-663"/>
</dbReference>
<dbReference type="PDB" id="7KAR">
    <property type="method" value="EM"/>
    <property type="resolution" value="4.00 A"/>
    <property type="chains" value="D=2-663"/>
</dbReference>
<dbReference type="PDB" id="7KAS">
    <property type="method" value="EM"/>
    <property type="resolution" value="3.90 A"/>
    <property type="chains" value="D=2-663"/>
</dbReference>
<dbReference type="PDB" id="7KAT">
    <property type="method" value="EM"/>
    <property type="resolution" value="4.40 A"/>
    <property type="chains" value="D=2-663"/>
</dbReference>
<dbReference type="PDB" id="7KAU">
    <property type="method" value="EM"/>
    <property type="resolution" value="4.00 A"/>
    <property type="chains" value="D=2-663"/>
</dbReference>
<dbReference type="PDB" id="7KB5">
    <property type="method" value="EM"/>
    <property type="resolution" value="3.80 A"/>
    <property type="chains" value="D=2-663"/>
</dbReference>
<dbReference type="PDBsum" id="6N3Q"/>
<dbReference type="PDBsum" id="6ND1"/>
<dbReference type="PDBsum" id="7AFT"/>
<dbReference type="PDBsum" id="7KAH"/>
<dbReference type="PDBsum" id="7KAI"/>
<dbReference type="PDBsum" id="7KAJ"/>
<dbReference type="PDBsum" id="7KAO"/>
<dbReference type="PDBsum" id="7KAP"/>
<dbReference type="PDBsum" id="7KAQ"/>
<dbReference type="PDBsum" id="7KAR"/>
<dbReference type="PDBsum" id="7KAS"/>
<dbReference type="PDBsum" id="7KAT"/>
<dbReference type="PDBsum" id="7KAU"/>
<dbReference type="PDBsum" id="7KB5"/>
<dbReference type="EMDB" id="EMD-0336"/>
<dbReference type="EMDB" id="EMD-0440"/>
<dbReference type="EMDB" id="EMD-11774"/>
<dbReference type="EMDB" id="EMD-22770"/>
<dbReference type="EMDB" id="EMD-22771"/>
<dbReference type="EMDB" id="EMD-22772"/>
<dbReference type="EMDB" id="EMD-22778"/>
<dbReference type="EMDB" id="EMD-22779"/>
<dbReference type="EMDB" id="EMD-22780"/>
<dbReference type="EMDB" id="EMD-22781"/>
<dbReference type="EMDB" id="EMD-22782"/>
<dbReference type="EMDB" id="EMD-22783"/>
<dbReference type="EMDB" id="EMD-22784"/>
<dbReference type="EMDB" id="EMD-22787"/>
<dbReference type="EMDB" id="EMD-29608"/>
<dbReference type="EMDB" id="EMD-29609"/>
<dbReference type="EMDB" id="EMD-29610"/>
<dbReference type="EMDB" id="EMD-29611"/>
<dbReference type="EMDB" id="EMD-29612"/>
<dbReference type="EMDB" id="EMD-29613"/>
<dbReference type="EMDB" id="EMD-29614"/>
<dbReference type="EMDB" id="EMD-29616"/>
<dbReference type="EMDB" id="EMD-29617"/>
<dbReference type="EMDB" id="EMD-29635"/>
<dbReference type="SMR" id="P14906"/>
<dbReference type="BioGRID" id="34644">
    <property type="interactions" value="677"/>
</dbReference>
<dbReference type="ComplexPortal" id="CPX-3055">
    <property type="entry name" value="Translocon complex"/>
</dbReference>
<dbReference type="ComplexPortal" id="CPX-3056">
    <property type="entry name" value="SEC62-SEC63 complex"/>
</dbReference>
<dbReference type="DIP" id="DIP-2396N"/>
<dbReference type="FunCoup" id="P14906">
    <property type="interactions" value="568"/>
</dbReference>
<dbReference type="IntAct" id="P14906">
    <property type="interactions" value="48"/>
</dbReference>
<dbReference type="MINT" id="P14906"/>
<dbReference type="STRING" id="4932.YOR254C"/>
<dbReference type="TCDB" id="3.A.5.8.1">
    <property type="family name" value="the general secretory pathway (sec) family"/>
</dbReference>
<dbReference type="iPTMnet" id="P14906"/>
<dbReference type="PaxDb" id="4932-YOR254C"/>
<dbReference type="PeptideAtlas" id="P14906"/>
<dbReference type="EnsemblFungi" id="YOR254C_mRNA">
    <property type="protein sequence ID" value="YOR254C"/>
    <property type="gene ID" value="YOR254C"/>
</dbReference>
<dbReference type="GeneID" id="854428"/>
<dbReference type="KEGG" id="sce:YOR254C"/>
<dbReference type="AGR" id="SGD:S000005780"/>
<dbReference type="SGD" id="S000005780">
    <property type="gene designation" value="SEC63"/>
</dbReference>
<dbReference type="VEuPathDB" id="FungiDB:YOR254C"/>
<dbReference type="eggNOG" id="KOG0721">
    <property type="taxonomic scope" value="Eukaryota"/>
</dbReference>
<dbReference type="GeneTree" id="ENSGT00390000001965"/>
<dbReference type="HOGENOM" id="CLU_014210_0_0_1"/>
<dbReference type="InParanoid" id="P14906"/>
<dbReference type="OMA" id="ETWPFFL"/>
<dbReference type="OrthoDB" id="1734229at2759"/>
<dbReference type="BioCyc" id="YEAST:G3O-33745-MONOMER"/>
<dbReference type="BioGRID-ORCS" id="854428">
    <property type="hits" value="9 hits in 10 CRISPR screens"/>
</dbReference>
<dbReference type="PRO" id="PR:P14906"/>
<dbReference type="Proteomes" id="UP000002311">
    <property type="component" value="Chromosome XV"/>
</dbReference>
<dbReference type="RNAct" id="P14906">
    <property type="molecule type" value="protein"/>
</dbReference>
<dbReference type="GO" id="GO:0005783">
    <property type="term" value="C:endoplasmic reticulum"/>
    <property type="evidence" value="ECO:0000314"/>
    <property type="project" value="SGD"/>
</dbReference>
<dbReference type="GO" id="GO:0005739">
    <property type="term" value="C:mitochondrion"/>
    <property type="evidence" value="ECO:0007005"/>
    <property type="project" value="SGD"/>
</dbReference>
<dbReference type="GO" id="GO:0005637">
    <property type="term" value="C:nuclear inner membrane"/>
    <property type="evidence" value="ECO:0007669"/>
    <property type="project" value="UniProtKB-SubCell"/>
</dbReference>
<dbReference type="GO" id="GO:0030867">
    <property type="term" value="C:rough endoplasmic reticulum membrane"/>
    <property type="evidence" value="ECO:0000303"/>
    <property type="project" value="ComplexPortal"/>
</dbReference>
<dbReference type="GO" id="GO:0031207">
    <property type="term" value="C:Sec62/Sec63 complex"/>
    <property type="evidence" value="ECO:0000353"/>
    <property type="project" value="SGD"/>
</dbReference>
<dbReference type="GO" id="GO:0071256">
    <property type="term" value="C:translocon complex"/>
    <property type="evidence" value="ECO:0000353"/>
    <property type="project" value="ComplexPortal"/>
</dbReference>
<dbReference type="GO" id="GO:0008320">
    <property type="term" value="F:protein transmembrane transporter activity"/>
    <property type="evidence" value="ECO:0000314"/>
    <property type="project" value="SGD"/>
</dbReference>
<dbReference type="GO" id="GO:0046967">
    <property type="term" value="P:cytosol to endoplasmic reticulum transport"/>
    <property type="evidence" value="ECO:0000315"/>
    <property type="project" value="SGD"/>
</dbReference>
<dbReference type="GO" id="GO:0006620">
    <property type="term" value="P:post-translational protein targeting to endoplasmic reticulum membrane"/>
    <property type="evidence" value="ECO:0000315"/>
    <property type="project" value="SGD"/>
</dbReference>
<dbReference type="GO" id="GO:0031204">
    <property type="term" value="P:post-translational protein targeting to membrane, translocation"/>
    <property type="evidence" value="ECO:0000314"/>
    <property type="project" value="ComplexPortal"/>
</dbReference>
<dbReference type="GO" id="GO:0006614">
    <property type="term" value="P:SRP-dependent cotranslational protein targeting to membrane"/>
    <property type="evidence" value="ECO:0000315"/>
    <property type="project" value="SGD"/>
</dbReference>
<dbReference type="CDD" id="cd06257">
    <property type="entry name" value="DnaJ"/>
    <property type="match status" value="1"/>
</dbReference>
<dbReference type="FunFam" id="1.10.287.110:FF:000114">
    <property type="entry name" value="SEC63 isoform 5"/>
    <property type="match status" value="1"/>
</dbReference>
<dbReference type="Gene3D" id="1.10.287.110">
    <property type="entry name" value="DnaJ domain"/>
    <property type="match status" value="1"/>
</dbReference>
<dbReference type="InterPro" id="IPR001623">
    <property type="entry name" value="DnaJ_domain"/>
</dbReference>
<dbReference type="InterPro" id="IPR018253">
    <property type="entry name" value="DnaJ_domain_CS"/>
</dbReference>
<dbReference type="InterPro" id="IPR014756">
    <property type="entry name" value="Ig_E-set"/>
</dbReference>
<dbReference type="InterPro" id="IPR036869">
    <property type="entry name" value="J_dom_sf"/>
</dbReference>
<dbReference type="InterPro" id="IPR004179">
    <property type="entry name" value="Sec63-dom"/>
</dbReference>
<dbReference type="PANTHER" id="PTHR24075">
    <property type="entry name" value="SEC63 DOMAIN-CONTAINING"/>
    <property type="match status" value="1"/>
</dbReference>
<dbReference type="PANTHER" id="PTHR24075:SF0">
    <property type="entry name" value="TRANSLOCATION PROTEIN SEC63 HOMOLOG"/>
    <property type="match status" value="1"/>
</dbReference>
<dbReference type="Pfam" id="PF00226">
    <property type="entry name" value="DnaJ"/>
    <property type="match status" value="1"/>
</dbReference>
<dbReference type="PRINTS" id="PR00625">
    <property type="entry name" value="JDOMAIN"/>
</dbReference>
<dbReference type="SMART" id="SM00271">
    <property type="entry name" value="DnaJ"/>
    <property type="match status" value="1"/>
</dbReference>
<dbReference type="SMART" id="SM00973">
    <property type="entry name" value="Sec63"/>
    <property type="match status" value="1"/>
</dbReference>
<dbReference type="SUPFAM" id="SSF46565">
    <property type="entry name" value="Chaperone J-domain"/>
    <property type="match status" value="1"/>
</dbReference>
<dbReference type="SUPFAM" id="SSF81296">
    <property type="entry name" value="E set domains"/>
    <property type="match status" value="1"/>
</dbReference>
<dbReference type="SUPFAM" id="SSF158702">
    <property type="entry name" value="Sec63 N-terminal domain-like"/>
    <property type="match status" value="1"/>
</dbReference>
<dbReference type="PROSITE" id="PS00636">
    <property type="entry name" value="DNAJ_1"/>
    <property type="match status" value="1"/>
</dbReference>
<dbReference type="PROSITE" id="PS50076">
    <property type="entry name" value="DNAJ_2"/>
    <property type="match status" value="1"/>
</dbReference>
<feature type="chain" id="PRO_0000071095" description="Protein translocation protein SEC63">
    <location>
        <begin position="1"/>
        <end position="663"/>
    </location>
</feature>
<feature type="topological domain" description="Lumenal" evidence="1">
    <location>
        <begin position="1"/>
        <end position="13"/>
    </location>
</feature>
<feature type="transmembrane region" description="Helical" evidence="1">
    <location>
        <begin position="14"/>
        <end position="41"/>
    </location>
</feature>
<feature type="topological domain" description="Cytoplasmic" evidence="1">
    <location>
        <begin position="42"/>
        <end position="92"/>
    </location>
</feature>
<feature type="transmembrane region" description="Helical" evidence="1">
    <location>
        <begin position="93"/>
        <end position="108"/>
    </location>
</feature>
<feature type="topological domain" description="Lumenal" evidence="1">
    <location>
        <begin position="109"/>
        <end position="220"/>
    </location>
</feature>
<feature type="transmembrane region" description="Helical" evidence="1">
    <location>
        <begin position="221"/>
        <end position="239"/>
    </location>
</feature>
<feature type="topological domain" description="Cytoplasmic" evidence="1">
    <location>
        <begin position="240"/>
        <end position="663"/>
    </location>
</feature>
<feature type="domain" description="J" evidence="2">
    <location>
        <begin position="123"/>
        <end position="198"/>
    </location>
</feature>
<feature type="domain" description="SEC63">
    <location>
        <begin position="228"/>
        <end position="532"/>
    </location>
</feature>
<feature type="repeat" description="1">
    <location>
        <begin position="461"/>
        <end position="471"/>
    </location>
</feature>
<feature type="repeat" description="2">
    <location>
        <begin position="493"/>
        <end position="503"/>
    </location>
</feature>
<feature type="region of interest" description="2 X 11 AA repeats">
    <location>
        <begin position="461"/>
        <end position="503"/>
    </location>
</feature>
<feature type="region of interest" description="Disordered" evidence="3">
    <location>
        <begin position="615"/>
        <end position="663"/>
    </location>
</feature>
<feature type="compositionally biased region" description="Acidic residues" evidence="3">
    <location>
        <begin position="622"/>
        <end position="663"/>
    </location>
</feature>
<feature type="modified residue" description="Phosphoserine" evidence="13 14 15 16">
    <location>
        <position position="512"/>
    </location>
</feature>
<feature type="mutagenesis site" description="Temperature-sensitive." evidence="11">
    <original>A</original>
    <variation>T</variation>
    <location>
        <position position="179"/>
    </location>
</feature>
<feature type="mutagenesis site" description="Temperature-sensitive." evidence="11">
    <original>P</original>
    <variation>L</variation>
    <location>
        <position position="426"/>
    </location>
</feature>
<feature type="mutagenesis site" description="Temperature-sensitive." evidence="11">
    <original>I</original>
    <variation>N</variation>
    <location>
        <position position="431"/>
    </location>
</feature>
<feature type="mutagenesis site" description="Temperature-sensitive." evidence="11">
    <original>P</original>
    <variation>A</variation>
    <location>
        <position position="503"/>
    </location>
</feature>
<feature type="mutagenesis site" description="Temperature-sensitive." evidence="11">
    <original>G</original>
    <variation>R</variation>
    <location>
        <position position="511"/>
    </location>
</feature>
<feature type="mutagenesis site" description="Abolishes interaction with SEC62; defect in protein translocation." evidence="7">
    <original>T</original>
    <variation>A</variation>
    <location>
        <position position="652"/>
    </location>
</feature>
<feature type="mutagenesis site" description="Abolishes interaction with SEC62; defect in protein translocation." evidence="7">
    <original>T</original>
    <variation>A</variation>
    <location>
        <position position="654"/>
    </location>
</feature>
<feature type="sequence conflict" description="In Ref. 1; CAA34424." evidence="12" ref="1">
    <original>V</original>
    <variation>I</variation>
    <location>
        <position position="263"/>
    </location>
</feature>
<feature type="sequence conflict" description="In Ref. 1; CAA34424." evidence="12" ref="1">
    <original>F</original>
    <variation>L</variation>
    <location>
        <position position="293"/>
    </location>
</feature>
<feature type="strand" evidence="17">
    <location>
        <begin position="8"/>
        <end position="13"/>
    </location>
</feature>
<feature type="helix" evidence="17">
    <location>
        <begin position="14"/>
        <end position="35"/>
    </location>
</feature>
<feature type="helix" evidence="17">
    <location>
        <begin position="59"/>
        <end position="64"/>
    </location>
</feature>
<feature type="helix" evidence="17">
    <location>
        <begin position="69"/>
        <end position="77"/>
    </location>
</feature>
<feature type="helix" evidence="17">
    <location>
        <begin position="94"/>
        <end position="112"/>
    </location>
</feature>
<feature type="strand" evidence="19">
    <location>
        <begin position="205"/>
        <end position="207"/>
    </location>
</feature>
<feature type="strand" evidence="17">
    <location>
        <begin position="209"/>
        <end position="212"/>
    </location>
</feature>
<feature type="turn" evidence="17">
    <location>
        <begin position="213"/>
        <end position="215"/>
    </location>
</feature>
<feature type="helix" evidence="17">
    <location>
        <begin position="220"/>
        <end position="232"/>
    </location>
</feature>
<feature type="helix" evidence="17">
    <location>
        <begin position="234"/>
        <end position="246"/>
    </location>
</feature>
<feature type="strand" evidence="17">
    <location>
        <begin position="247"/>
        <end position="249"/>
    </location>
</feature>
<feature type="strand" evidence="17">
    <location>
        <begin position="253"/>
        <end position="255"/>
    </location>
</feature>
<feature type="helix" evidence="17">
    <location>
        <begin position="256"/>
        <end position="267"/>
    </location>
</feature>
<feature type="helix" evidence="17">
    <location>
        <begin position="277"/>
        <end position="284"/>
    </location>
</feature>
<feature type="helix" evidence="17">
    <location>
        <begin position="289"/>
        <end position="293"/>
    </location>
</feature>
<feature type="helix" evidence="17">
    <location>
        <begin position="299"/>
        <end position="310"/>
    </location>
</feature>
<feature type="helix" evidence="17">
    <location>
        <begin position="319"/>
        <end position="342"/>
    </location>
</feature>
<feature type="helix" evidence="17">
    <location>
        <begin position="346"/>
        <end position="361"/>
    </location>
</feature>
<feature type="turn" evidence="17">
    <location>
        <begin position="370"/>
        <end position="372"/>
    </location>
</feature>
<feature type="strand" evidence="17">
    <location>
        <begin position="373"/>
        <end position="376"/>
    </location>
</feature>
<feature type="helix" evidence="17">
    <location>
        <begin position="379"/>
        <end position="385"/>
    </location>
</feature>
<feature type="helix" evidence="17">
    <location>
        <begin position="392"/>
        <end position="396"/>
    </location>
</feature>
<feature type="helix" evidence="17">
    <location>
        <begin position="400"/>
        <end position="407"/>
    </location>
</feature>
<feature type="helix" evidence="17">
    <location>
        <begin position="412"/>
        <end position="422"/>
    </location>
</feature>
<feature type="strand" evidence="17">
    <location>
        <begin position="430"/>
        <end position="436"/>
    </location>
</feature>
<feature type="strand" evidence="17">
    <location>
        <begin position="440"/>
        <end position="442"/>
    </location>
</feature>
<feature type="strand" evidence="17">
    <location>
        <begin position="450"/>
        <end position="455"/>
    </location>
</feature>
<feature type="strand" evidence="18">
    <location>
        <begin position="460"/>
        <end position="462"/>
    </location>
</feature>
<feature type="helix" evidence="17">
    <location>
        <begin position="467"/>
        <end position="469"/>
    </location>
</feature>
<feature type="strand" evidence="17">
    <location>
        <begin position="472"/>
        <end position="476"/>
    </location>
</feature>
<feature type="helix" evidence="17">
    <location>
        <begin position="481"/>
        <end position="484"/>
    </location>
</feature>
<feature type="turn" evidence="17">
    <location>
        <begin position="487"/>
        <end position="490"/>
    </location>
</feature>
<feature type="helix" evidence="17">
    <location>
        <begin position="491"/>
        <end position="493"/>
    </location>
</feature>
<feature type="strand" evidence="17">
    <location>
        <begin position="503"/>
        <end position="507"/>
    </location>
</feature>
<feature type="strand" evidence="17">
    <location>
        <begin position="513"/>
        <end position="522"/>
    </location>
</feature>
<feature type="strand" evidence="17">
    <location>
        <begin position="530"/>
        <end position="532"/>
    </location>
</feature>
<feature type="helix" evidence="17">
    <location>
        <begin position="538"/>
        <end position="540"/>
    </location>
</feature>
<feature type="strand" evidence="19">
    <location>
        <begin position="541"/>
        <end position="543"/>
    </location>
</feature>
<feature type="strand" evidence="17">
    <location>
        <begin position="549"/>
        <end position="551"/>
    </location>
</feature>
<feature type="helix" evidence="19">
    <location>
        <begin position="555"/>
        <end position="557"/>
    </location>
</feature>
<feature type="strand" evidence="17">
    <location>
        <begin position="569"/>
        <end position="574"/>
    </location>
</feature>
<feature type="strand" evidence="17">
    <location>
        <begin position="584"/>
        <end position="597"/>
    </location>
</feature>
<feature type="strand" evidence="17">
    <location>
        <begin position="602"/>
        <end position="610"/>
    </location>
</feature>
<keyword id="KW-0002">3D-structure</keyword>
<keyword id="KW-0143">Chaperone</keyword>
<keyword id="KW-0256">Endoplasmic reticulum</keyword>
<keyword id="KW-0472">Membrane</keyword>
<keyword id="KW-0539">Nucleus</keyword>
<keyword id="KW-0597">Phosphoprotein</keyword>
<keyword id="KW-0653">Protein transport</keyword>
<keyword id="KW-1185">Reference proteome</keyword>
<keyword id="KW-0677">Repeat</keyword>
<keyword id="KW-0812">Transmembrane</keyword>
<keyword id="KW-1133">Transmembrane helix</keyword>
<keyword id="KW-0813">Transport</keyword>